<keyword id="KW-0007">Acetylation</keyword>
<keyword id="KW-0240">DNA-directed RNA polymerase</keyword>
<keyword id="KW-0460">Magnesium</keyword>
<keyword id="KW-0479">Metal-binding</keyword>
<keyword id="KW-0548">Nucleotidyltransferase</keyword>
<keyword id="KW-0804">Transcription</keyword>
<keyword id="KW-0808">Transferase</keyword>
<keyword id="KW-0862">Zinc</keyword>
<dbReference type="EC" id="2.7.7.6" evidence="1"/>
<dbReference type="EMBL" id="CP000247">
    <property type="protein sequence ID" value="ABG72152.1"/>
    <property type="molecule type" value="Genomic_DNA"/>
</dbReference>
<dbReference type="RefSeq" id="WP_000653950.1">
    <property type="nucleotide sequence ID" value="NC_008253.1"/>
</dbReference>
<dbReference type="SMR" id="Q0TA77"/>
<dbReference type="KEGG" id="ecp:ECP_4201"/>
<dbReference type="HOGENOM" id="CLU_000524_3_1_6"/>
<dbReference type="Proteomes" id="UP000009182">
    <property type="component" value="Chromosome"/>
</dbReference>
<dbReference type="GO" id="GO:0000428">
    <property type="term" value="C:DNA-directed RNA polymerase complex"/>
    <property type="evidence" value="ECO:0007669"/>
    <property type="project" value="UniProtKB-KW"/>
</dbReference>
<dbReference type="GO" id="GO:0003677">
    <property type="term" value="F:DNA binding"/>
    <property type="evidence" value="ECO:0007669"/>
    <property type="project" value="UniProtKB-UniRule"/>
</dbReference>
<dbReference type="GO" id="GO:0003899">
    <property type="term" value="F:DNA-directed RNA polymerase activity"/>
    <property type="evidence" value="ECO:0007669"/>
    <property type="project" value="UniProtKB-UniRule"/>
</dbReference>
<dbReference type="GO" id="GO:0000287">
    <property type="term" value="F:magnesium ion binding"/>
    <property type="evidence" value="ECO:0007669"/>
    <property type="project" value="UniProtKB-UniRule"/>
</dbReference>
<dbReference type="GO" id="GO:0008270">
    <property type="term" value="F:zinc ion binding"/>
    <property type="evidence" value="ECO:0007669"/>
    <property type="project" value="UniProtKB-UniRule"/>
</dbReference>
<dbReference type="GO" id="GO:0006351">
    <property type="term" value="P:DNA-templated transcription"/>
    <property type="evidence" value="ECO:0007669"/>
    <property type="project" value="UniProtKB-UniRule"/>
</dbReference>
<dbReference type="CDD" id="cd02655">
    <property type="entry name" value="RNAP_beta'_C"/>
    <property type="match status" value="1"/>
</dbReference>
<dbReference type="CDD" id="cd01609">
    <property type="entry name" value="RNAP_beta'_N"/>
    <property type="match status" value="1"/>
</dbReference>
<dbReference type="FunFam" id="1.10.132.30:FF:000003">
    <property type="entry name" value="DNA-directed RNA polymerase subunit beta"/>
    <property type="match status" value="1"/>
</dbReference>
<dbReference type="FunFam" id="1.10.150.390:FF:000002">
    <property type="entry name" value="DNA-directed RNA polymerase subunit beta"/>
    <property type="match status" value="1"/>
</dbReference>
<dbReference type="FunFam" id="1.10.274.100:FF:000002">
    <property type="entry name" value="DNA-directed RNA polymerase subunit beta"/>
    <property type="match status" value="1"/>
</dbReference>
<dbReference type="FunFam" id="1.10.40.90:FF:000001">
    <property type="entry name" value="DNA-directed RNA polymerase subunit beta"/>
    <property type="match status" value="1"/>
</dbReference>
<dbReference type="FunFam" id="2.40.50.100:FF:000012">
    <property type="entry name" value="DNA-directed RNA polymerase subunit beta"/>
    <property type="match status" value="1"/>
</dbReference>
<dbReference type="FunFam" id="2.40.50.100:FF:000016">
    <property type="entry name" value="DNA-directed RNA polymerase subunit beta"/>
    <property type="match status" value="1"/>
</dbReference>
<dbReference type="FunFam" id="2.40.50.100:FF:000019">
    <property type="entry name" value="DNA-directed RNA polymerase subunit beta"/>
    <property type="match status" value="1"/>
</dbReference>
<dbReference type="FunFam" id="4.10.860.120:FF:000001">
    <property type="entry name" value="DNA-directed RNA polymerase subunit beta"/>
    <property type="match status" value="1"/>
</dbReference>
<dbReference type="Gene3D" id="1.10.132.30">
    <property type="match status" value="1"/>
</dbReference>
<dbReference type="Gene3D" id="1.10.150.390">
    <property type="match status" value="1"/>
</dbReference>
<dbReference type="Gene3D" id="1.10.1790.20">
    <property type="match status" value="1"/>
</dbReference>
<dbReference type="Gene3D" id="1.10.40.90">
    <property type="match status" value="1"/>
</dbReference>
<dbReference type="Gene3D" id="2.40.40.20">
    <property type="match status" value="1"/>
</dbReference>
<dbReference type="Gene3D" id="2.40.50.100">
    <property type="match status" value="3"/>
</dbReference>
<dbReference type="Gene3D" id="4.10.860.120">
    <property type="entry name" value="RNA polymerase II, clamp domain"/>
    <property type="match status" value="1"/>
</dbReference>
<dbReference type="Gene3D" id="1.10.274.100">
    <property type="entry name" value="RNA polymerase Rpb1, domain 3"/>
    <property type="match status" value="1"/>
</dbReference>
<dbReference type="HAMAP" id="MF_01322">
    <property type="entry name" value="RNApol_bact_RpoC"/>
    <property type="match status" value="1"/>
</dbReference>
<dbReference type="InterPro" id="IPR045867">
    <property type="entry name" value="DNA-dir_RpoC_beta_prime"/>
</dbReference>
<dbReference type="InterPro" id="IPR012754">
    <property type="entry name" value="DNA-dir_RpoC_beta_prime_bact"/>
</dbReference>
<dbReference type="InterPro" id="IPR000722">
    <property type="entry name" value="RNA_pol_asu"/>
</dbReference>
<dbReference type="InterPro" id="IPR006592">
    <property type="entry name" value="RNA_pol_N"/>
</dbReference>
<dbReference type="InterPro" id="IPR007080">
    <property type="entry name" value="RNA_pol_Rpb1_1"/>
</dbReference>
<dbReference type="InterPro" id="IPR007066">
    <property type="entry name" value="RNA_pol_Rpb1_3"/>
</dbReference>
<dbReference type="InterPro" id="IPR042102">
    <property type="entry name" value="RNA_pol_Rpb1_3_sf"/>
</dbReference>
<dbReference type="InterPro" id="IPR007083">
    <property type="entry name" value="RNA_pol_Rpb1_4"/>
</dbReference>
<dbReference type="InterPro" id="IPR007081">
    <property type="entry name" value="RNA_pol_Rpb1_5"/>
</dbReference>
<dbReference type="InterPro" id="IPR044893">
    <property type="entry name" value="RNA_pol_Rpb1_clamp_domain"/>
</dbReference>
<dbReference type="InterPro" id="IPR038120">
    <property type="entry name" value="Rpb1_funnel_sf"/>
</dbReference>
<dbReference type="NCBIfam" id="TIGR02386">
    <property type="entry name" value="rpoC_TIGR"/>
    <property type="match status" value="1"/>
</dbReference>
<dbReference type="PANTHER" id="PTHR19376">
    <property type="entry name" value="DNA-DIRECTED RNA POLYMERASE"/>
    <property type="match status" value="1"/>
</dbReference>
<dbReference type="PANTHER" id="PTHR19376:SF54">
    <property type="entry name" value="DNA-DIRECTED RNA POLYMERASE SUBUNIT BETA"/>
    <property type="match status" value="1"/>
</dbReference>
<dbReference type="Pfam" id="PF04997">
    <property type="entry name" value="RNA_pol_Rpb1_1"/>
    <property type="match status" value="1"/>
</dbReference>
<dbReference type="Pfam" id="PF00623">
    <property type="entry name" value="RNA_pol_Rpb1_2"/>
    <property type="match status" value="2"/>
</dbReference>
<dbReference type="Pfam" id="PF04983">
    <property type="entry name" value="RNA_pol_Rpb1_3"/>
    <property type="match status" value="1"/>
</dbReference>
<dbReference type="Pfam" id="PF05000">
    <property type="entry name" value="RNA_pol_Rpb1_4"/>
    <property type="match status" value="1"/>
</dbReference>
<dbReference type="Pfam" id="PF04998">
    <property type="entry name" value="RNA_pol_Rpb1_5"/>
    <property type="match status" value="1"/>
</dbReference>
<dbReference type="SMART" id="SM00663">
    <property type="entry name" value="RPOLA_N"/>
    <property type="match status" value="1"/>
</dbReference>
<dbReference type="SUPFAM" id="SSF64484">
    <property type="entry name" value="beta and beta-prime subunits of DNA dependent RNA-polymerase"/>
    <property type="match status" value="1"/>
</dbReference>
<sequence length="1407" mass="155213">MKDLLKFLKAQTKTEEFDAIKIALASPDMIRSWSFGEVKKPETINYRTFKPERDGLFCARIFGPVKDYECLCGKYKRLKHRGVICEKCGVEVTQTKVRRERMGHIELASPTAHIWFLKSLPSRIGLLLDMPLRDIERVLYFESYVVIEGGMTNLERQQILTEEQYLDALEEFGDEFDAKMGAEAIQALLKSMDLEQECEQLREELNETNSETKRKKLTKRIKLLEAFVQSGNKPEWMILTVLPVLPPDLRPLVPLDGGRFATSDLNDLYRRVINRNNRLKRLLDLAAPDIIVRNEKRMLQEAVDALLDNGRRGRAITGSNKRPLKSLADMIKGKQGRFRQNLLGKRVDYSGRSVITVGPYLRLHQCGLPKKMALELFKPFIYGKLELRGLATTIKAAKKMVEREEAVVWDILDEVIREHPVLLNRAPTLHRLGIQAFEPVLIEGKAIQLHPLVCAAYNADFDGDQMAVHVPLTLEAQLEARALMMSTNNILSPANGEPIIVPSQDVVLGLYYMTRDCVNAKGEGMVLTGPKEAERLYRSGLASLHARVKVRITEYEKDANGELVAKTSLKDTTVGRAILWMIVPKGLPYSIVNQALGKKAISKMLNTCYRILGLKPTVIFADQIMYTGFAYAARSGASVGIDDMVIPEKKHEIISEAEAEVAEIQEQFQSGLVTAGERYNKVIDIWAAANDRVSKAMMDNLQTETVINRDGQEEKQVSFNSIYMMADSGARGSAAQIRQLAGMRGLMAKPDGSIIETPITANFREGLNVLQYFISTHGARKGLADTALKTANSGYLTRRLVDVAQDLVVTEDDRGTHEGIMMTPVIEGGDVKEPLRDRVLGRVTAEDVLKPGTADILVPRNTLLHEQWCDLLEENSVDAVKVRSVVSCDTDFGVCAHCYGRDLARGHIINKGEAIGVIAAQSIGEPGTQLTMRTFHIGGAASRAAAESSIQVKNKGSIKLSNVKSVVNSSGKLVITSRNTELKLIDEFGRTKESYKVPYGAVLAKGDGEQVAGGETVANWDPHTMPVITEVSGFVRFTDMIDGQTITRQTDELTGLSSLVVLDSAERTAGGKDLRPALKIVDAQGNDVLIPGTDMPAQYFLPGKAIVQLEDGVQISSGDTLARIPQESGGTKDITGGLPRVADLFEARRPKEPAILAEISGIVSFGKETKGKRRLVITPVDGSDPYEEMIPKWRQLNVFEGERVERGDVISDGPEAPHDILRLRGVHAVTRYIVNEVQDVYRLQGVKINDKHIEVIVRQMLRKATIVNAGSSDFLEGEQVEYSRVKIANRELEANGKVGATYSRDLLGITKASLATESFISAASFQETTRVLTEAAVAGKRDELRGLKENVIVGRLIPAGTGYAYHQDRMRRRAAGEAPAAPQVTAEDASASLAELLNAGLGGSDNE</sequence>
<organism>
    <name type="scientific">Escherichia coli O6:K15:H31 (strain 536 / UPEC)</name>
    <dbReference type="NCBI Taxonomy" id="362663"/>
    <lineage>
        <taxon>Bacteria</taxon>
        <taxon>Pseudomonadati</taxon>
        <taxon>Pseudomonadota</taxon>
        <taxon>Gammaproteobacteria</taxon>
        <taxon>Enterobacterales</taxon>
        <taxon>Enterobacteriaceae</taxon>
        <taxon>Escherichia</taxon>
    </lineage>
</organism>
<evidence type="ECO:0000255" key="1">
    <source>
        <dbReference type="HAMAP-Rule" id="MF_01322"/>
    </source>
</evidence>
<evidence type="ECO:0000305" key="2"/>
<feature type="chain" id="PRO_0000353361" description="DNA-directed RNA polymerase subunit beta'">
    <location>
        <begin position="1"/>
        <end position="1407"/>
    </location>
</feature>
<feature type="binding site" evidence="1">
    <location>
        <position position="70"/>
    </location>
    <ligand>
        <name>Zn(2+)</name>
        <dbReference type="ChEBI" id="CHEBI:29105"/>
    </ligand>
</feature>
<feature type="binding site" evidence="1">
    <location>
        <position position="72"/>
    </location>
    <ligand>
        <name>Zn(2+)</name>
        <dbReference type="ChEBI" id="CHEBI:29105"/>
    </ligand>
</feature>
<feature type="binding site" evidence="1">
    <location>
        <position position="85"/>
    </location>
    <ligand>
        <name>Zn(2+)</name>
        <dbReference type="ChEBI" id="CHEBI:29105"/>
    </ligand>
</feature>
<feature type="binding site" evidence="1">
    <location>
        <position position="88"/>
    </location>
    <ligand>
        <name>Zn(2+)</name>
        <dbReference type="ChEBI" id="CHEBI:29105"/>
    </ligand>
</feature>
<feature type="binding site" evidence="1">
    <location>
        <position position="460"/>
    </location>
    <ligand>
        <name>Mg(2+)</name>
        <dbReference type="ChEBI" id="CHEBI:18420"/>
    </ligand>
</feature>
<feature type="binding site" evidence="1">
    <location>
        <position position="462"/>
    </location>
    <ligand>
        <name>Mg(2+)</name>
        <dbReference type="ChEBI" id="CHEBI:18420"/>
    </ligand>
</feature>
<feature type="binding site" evidence="1">
    <location>
        <position position="464"/>
    </location>
    <ligand>
        <name>Mg(2+)</name>
        <dbReference type="ChEBI" id="CHEBI:18420"/>
    </ligand>
</feature>
<feature type="modified residue" description="N6-acetyllysine" evidence="1">
    <location>
        <position position="972"/>
    </location>
</feature>
<reference key="1">
    <citation type="journal article" date="2006" name="Mol. Microbiol.">
        <title>Role of pathogenicity island-associated integrases in the genome plasticity of uropathogenic Escherichia coli strain 536.</title>
        <authorList>
            <person name="Hochhut B."/>
            <person name="Wilde C."/>
            <person name="Balling G."/>
            <person name="Middendorf B."/>
            <person name="Dobrindt U."/>
            <person name="Brzuszkiewicz E."/>
            <person name="Gottschalk G."/>
            <person name="Carniel E."/>
            <person name="Hacker J."/>
        </authorList>
    </citation>
    <scope>NUCLEOTIDE SEQUENCE [LARGE SCALE GENOMIC DNA]</scope>
    <source>
        <strain>536 / UPEC</strain>
    </source>
</reference>
<protein>
    <recommendedName>
        <fullName evidence="1">DNA-directed RNA polymerase subunit beta'</fullName>
        <shortName evidence="1">RNAP subunit beta'</shortName>
        <ecNumber evidence="1">2.7.7.6</ecNumber>
    </recommendedName>
    <alternativeName>
        <fullName evidence="1">RNA polymerase subunit beta'</fullName>
    </alternativeName>
    <alternativeName>
        <fullName evidence="1">Transcriptase subunit beta'</fullName>
    </alternativeName>
</protein>
<comment type="function">
    <text evidence="1">DNA-dependent RNA polymerase catalyzes the transcription of DNA into RNA using the four ribonucleoside triphosphates as substrates.</text>
</comment>
<comment type="catalytic activity">
    <reaction evidence="1">
        <text>RNA(n) + a ribonucleoside 5'-triphosphate = RNA(n+1) + diphosphate</text>
        <dbReference type="Rhea" id="RHEA:21248"/>
        <dbReference type="Rhea" id="RHEA-COMP:14527"/>
        <dbReference type="Rhea" id="RHEA-COMP:17342"/>
        <dbReference type="ChEBI" id="CHEBI:33019"/>
        <dbReference type="ChEBI" id="CHEBI:61557"/>
        <dbReference type="ChEBI" id="CHEBI:140395"/>
        <dbReference type="EC" id="2.7.7.6"/>
    </reaction>
</comment>
<comment type="cofactor">
    <cofactor evidence="1">
        <name>Mg(2+)</name>
        <dbReference type="ChEBI" id="CHEBI:18420"/>
    </cofactor>
    <text evidence="1">Binds 1 Mg(2+) ion per subunit.</text>
</comment>
<comment type="cofactor">
    <cofactor evidence="1">
        <name>Zn(2+)</name>
        <dbReference type="ChEBI" id="CHEBI:29105"/>
    </cofactor>
    <text evidence="2">Binds 1 Zn(2+) ion per subunit; 2 are expected compared to other E.coli strains.</text>
</comment>
<comment type="subunit">
    <text evidence="1">The RNAP catalytic core consists of 2 alpha, 1 beta, 1 beta' and 1 omega subunit. When a sigma factor is associated with the core the holoenzyme is formed, which can initiate transcription.</text>
</comment>
<comment type="similarity">
    <text evidence="1">Belongs to the RNA polymerase beta' chain family.</text>
</comment>
<accession>Q0TA77</accession>
<gene>
    <name evidence="1" type="primary">rpoC</name>
    <name type="ordered locus">ECP_4201</name>
</gene>
<proteinExistence type="inferred from homology"/>
<name>RPOC_ECOL5</name>